<gene>
    <name evidence="1" type="primary">dxs</name>
    <name type="ordered locus">jhp_0328</name>
</gene>
<name>DXS_HELPJ</name>
<accession>Q9ZM94</accession>
<reference key="1">
    <citation type="journal article" date="1999" name="Nature">
        <title>Genomic sequence comparison of two unrelated isolates of the human gastric pathogen Helicobacter pylori.</title>
        <authorList>
            <person name="Alm R.A."/>
            <person name="Ling L.-S.L."/>
            <person name="Moir D.T."/>
            <person name="King B.L."/>
            <person name="Brown E.D."/>
            <person name="Doig P.C."/>
            <person name="Smith D.R."/>
            <person name="Noonan B."/>
            <person name="Guild B.C."/>
            <person name="deJonge B.L."/>
            <person name="Carmel G."/>
            <person name="Tummino P.J."/>
            <person name="Caruso A."/>
            <person name="Uria-Nickelsen M."/>
            <person name="Mills D.M."/>
            <person name="Ives C."/>
            <person name="Gibson R."/>
            <person name="Merberg D."/>
            <person name="Mills S.D."/>
            <person name="Jiang Q."/>
            <person name="Taylor D.E."/>
            <person name="Vovis G.F."/>
            <person name="Trust T.J."/>
        </authorList>
    </citation>
    <scope>NUCLEOTIDE SEQUENCE [LARGE SCALE GENOMIC DNA]</scope>
    <source>
        <strain>J99 / ATCC 700824</strain>
    </source>
</reference>
<sequence length="618" mass="67782">MILQNKTFDLNPNDIAGLELVCQTLRNRILEVVSANGGHLSSSLGAVELIVGMHALFDCQKNPFIFDTSHQAYAHKLLTGRFESFSTLRQFQGLSGFTKPSESAYDYFIAGHSSTSVSIGVGVAKAFRLKQTLGMPIALLGDGSISAGIFYEALNELGDRKYPMIMILNDNEMSISTPIGALSKALSQLMKGPFYQSFRSKVKKILSTLPESVNYLASRFEESFKLITPGVFFEELGINYIGPINGHDLGTIIETLKLAKELKEPVLIHAQTLKGKGYKIAEGRYEKWHGVGPFDLDTGLSKKSKSATLSPTEAYSNTLLELAKKDEKIVGVTAAMPSGTGLDKLIDAYPLRFFDVAIAEQHALTSSSAMAKEGFKPFVSIYSTFLQRAYDSIVHDACISSLPIKLAIDRAGIVGEDGETHQGLLDVSYLRSIPNMVIFAPRDNETLKNAVYFANEHDSSPCAFRYPRGSFALKEGVFEPSGFVLGRSELLKKEGEILLIGYGNGVGRAHLVQLALKEKNIECALLDLRFLKPLDHNLSAIIAPYQKLYVFSDNYKLGGVASAILEFLSEQNILKPVKSFEITDEFIMHGNTALVEKSLGLDTESLTDAILKDLGQER</sequence>
<protein>
    <recommendedName>
        <fullName evidence="1">1-deoxy-D-xylulose-5-phosphate synthase</fullName>
        <ecNumber evidence="1">2.2.1.7</ecNumber>
    </recommendedName>
    <alternativeName>
        <fullName evidence="1">1-deoxyxylulose-5-phosphate synthase</fullName>
        <shortName evidence="1">DXP synthase</shortName>
        <shortName evidence="1">DXPS</shortName>
    </alternativeName>
</protein>
<evidence type="ECO:0000255" key="1">
    <source>
        <dbReference type="HAMAP-Rule" id="MF_00315"/>
    </source>
</evidence>
<feature type="chain" id="PRO_0000189120" description="1-deoxy-D-xylulose-5-phosphate synthase">
    <location>
        <begin position="1"/>
        <end position="618"/>
    </location>
</feature>
<feature type="binding site" evidence="1">
    <location>
        <position position="70"/>
    </location>
    <ligand>
        <name>thiamine diphosphate</name>
        <dbReference type="ChEBI" id="CHEBI:58937"/>
    </ligand>
</feature>
<feature type="binding site" evidence="1">
    <location>
        <begin position="111"/>
        <end position="113"/>
    </location>
    <ligand>
        <name>thiamine diphosphate</name>
        <dbReference type="ChEBI" id="CHEBI:58937"/>
    </ligand>
</feature>
<feature type="binding site" evidence="1">
    <location>
        <position position="142"/>
    </location>
    <ligand>
        <name>Mg(2+)</name>
        <dbReference type="ChEBI" id="CHEBI:18420"/>
    </ligand>
</feature>
<feature type="binding site" evidence="1">
    <location>
        <begin position="143"/>
        <end position="144"/>
    </location>
    <ligand>
        <name>thiamine diphosphate</name>
        <dbReference type="ChEBI" id="CHEBI:58937"/>
    </ligand>
</feature>
<feature type="binding site" evidence="1">
    <location>
        <position position="171"/>
    </location>
    <ligand>
        <name>Mg(2+)</name>
        <dbReference type="ChEBI" id="CHEBI:18420"/>
    </ligand>
</feature>
<feature type="binding site" evidence="1">
    <location>
        <position position="171"/>
    </location>
    <ligand>
        <name>thiamine diphosphate</name>
        <dbReference type="ChEBI" id="CHEBI:58937"/>
    </ligand>
</feature>
<feature type="binding site" evidence="1">
    <location>
        <position position="278"/>
    </location>
    <ligand>
        <name>thiamine diphosphate</name>
        <dbReference type="ChEBI" id="CHEBI:58937"/>
    </ligand>
</feature>
<feature type="binding site" evidence="1">
    <location>
        <position position="360"/>
    </location>
    <ligand>
        <name>thiamine diphosphate</name>
        <dbReference type="ChEBI" id="CHEBI:58937"/>
    </ligand>
</feature>
<dbReference type="EC" id="2.2.1.7" evidence="1"/>
<dbReference type="EMBL" id="AE001439">
    <property type="protein sequence ID" value="AAD05902.1"/>
    <property type="molecule type" value="Genomic_DNA"/>
</dbReference>
<dbReference type="PIR" id="H71946">
    <property type="entry name" value="H71946"/>
</dbReference>
<dbReference type="SMR" id="Q9ZM94"/>
<dbReference type="KEGG" id="hpj:jhp_0328"/>
<dbReference type="eggNOG" id="COG1154">
    <property type="taxonomic scope" value="Bacteria"/>
</dbReference>
<dbReference type="UniPathway" id="UPA00064">
    <property type="reaction ID" value="UER00091"/>
</dbReference>
<dbReference type="Proteomes" id="UP000000804">
    <property type="component" value="Chromosome"/>
</dbReference>
<dbReference type="GO" id="GO:0005829">
    <property type="term" value="C:cytosol"/>
    <property type="evidence" value="ECO:0007669"/>
    <property type="project" value="TreeGrafter"/>
</dbReference>
<dbReference type="GO" id="GO:0008661">
    <property type="term" value="F:1-deoxy-D-xylulose-5-phosphate synthase activity"/>
    <property type="evidence" value="ECO:0007669"/>
    <property type="project" value="UniProtKB-UniRule"/>
</dbReference>
<dbReference type="GO" id="GO:0000287">
    <property type="term" value="F:magnesium ion binding"/>
    <property type="evidence" value="ECO:0007669"/>
    <property type="project" value="UniProtKB-UniRule"/>
</dbReference>
<dbReference type="GO" id="GO:0030976">
    <property type="term" value="F:thiamine pyrophosphate binding"/>
    <property type="evidence" value="ECO:0007669"/>
    <property type="project" value="UniProtKB-UniRule"/>
</dbReference>
<dbReference type="GO" id="GO:0052865">
    <property type="term" value="P:1-deoxy-D-xylulose 5-phosphate biosynthetic process"/>
    <property type="evidence" value="ECO:0007669"/>
    <property type="project" value="UniProtKB-UniPathway"/>
</dbReference>
<dbReference type="GO" id="GO:0019288">
    <property type="term" value="P:isopentenyl diphosphate biosynthetic process, methylerythritol 4-phosphate pathway"/>
    <property type="evidence" value="ECO:0007669"/>
    <property type="project" value="TreeGrafter"/>
</dbReference>
<dbReference type="GO" id="GO:0016114">
    <property type="term" value="P:terpenoid biosynthetic process"/>
    <property type="evidence" value="ECO:0007669"/>
    <property type="project" value="UniProtKB-UniRule"/>
</dbReference>
<dbReference type="GO" id="GO:0009228">
    <property type="term" value="P:thiamine biosynthetic process"/>
    <property type="evidence" value="ECO:0007669"/>
    <property type="project" value="UniProtKB-UniRule"/>
</dbReference>
<dbReference type="CDD" id="cd02007">
    <property type="entry name" value="TPP_DXS"/>
    <property type="match status" value="1"/>
</dbReference>
<dbReference type="CDD" id="cd07033">
    <property type="entry name" value="TPP_PYR_DXS_TK_like"/>
    <property type="match status" value="1"/>
</dbReference>
<dbReference type="FunFam" id="3.40.50.970:FF:000005">
    <property type="entry name" value="1-deoxy-D-xylulose-5-phosphate synthase"/>
    <property type="match status" value="1"/>
</dbReference>
<dbReference type="Gene3D" id="3.40.50.920">
    <property type="match status" value="1"/>
</dbReference>
<dbReference type="Gene3D" id="3.40.50.970">
    <property type="match status" value="2"/>
</dbReference>
<dbReference type="HAMAP" id="MF_00315">
    <property type="entry name" value="DXP_synth"/>
    <property type="match status" value="1"/>
</dbReference>
<dbReference type="InterPro" id="IPR005477">
    <property type="entry name" value="Dxylulose-5-P_synthase"/>
</dbReference>
<dbReference type="InterPro" id="IPR029061">
    <property type="entry name" value="THDP-binding"/>
</dbReference>
<dbReference type="InterPro" id="IPR009014">
    <property type="entry name" value="Transketo_C/PFOR_II"/>
</dbReference>
<dbReference type="InterPro" id="IPR005475">
    <property type="entry name" value="Transketolase-like_Pyr-bd"/>
</dbReference>
<dbReference type="InterPro" id="IPR020826">
    <property type="entry name" value="Transketolase_BS"/>
</dbReference>
<dbReference type="InterPro" id="IPR033248">
    <property type="entry name" value="Transketolase_C"/>
</dbReference>
<dbReference type="InterPro" id="IPR049557">
    <property type="entry name" value="Transketolase_CS"/>
</dbReference>
<dbReference type="NCBIfam" id="TIGR00204">
    <property type="entry name" value="dxs"/>
    <property type="match status" value="1"/>
</dbReference>
<dbReference type="NCBIfam" id="NF003933">
    <property type="entry name" value="PRK05444.2-2"/>
    <property type="match status" value="1"/>
</dbReference>
<dbReference type="PANTHER" id="PTHR43322">
    <property type="entry name" value="1-D-DEOXYXYLULOSE 5-PHOSPHATE SYNTHASE-RELATED"/>
    <property type="match status" value="1"/>
</dbReference>
<dbReference type="PANTHER" id="PTHR43322:SF5">
    <property type="entry name" value="1-DEOXY-D-XYLULOSE-5-PHOSPHATE SYNTHASE, CHLOROPLASTIC"/>
    <property type="match status" value="1"/>
</dbReference>
<dbReference type="Pfam" id="PF13292">
    <property type="entry name" value="DXP_synthase_N"/>
    <property type="match status" value="1"/>
</dbReference>
<dbReference type="Pfam" id="PF02779">
    <property type="entry name" value="Transket_pyr"/>
    <property type="match status" value="1"/>
</dbReference>
<dbReference type="Pfam" id="PF02780">
    <property type="entry name" value="Transketolase_C"/>
    <property type="match status" value="1"/>
</dbReference>
<dbReference type="SMART" id="SM00861">
    <property type="entry name" value="Transket_pyr"/>
    <property type="match status" value="1"/>
</dbReference>
<dbReference type="SUPFAM" id="SSF52518">
    <property type="entry name" value="Thiamin diphosphate-binding fold (THDP-binding)"/>
    <property type="match status" value="1"/>
</dbReference>
<dbReference type="SUPFAM" id="SSF52922">
    <property type="entry name" value="TK C-terminal domain-like"/>
    <property type="match status" value="1"/>
</dbReference>
<dbReference type="PROSITE" id="PS00801">
    <property type="entry name" value="TRANSKETOLASE_1"/>
    <property type="match status" value="1"/>
</dbReference>
<dbReference type="PROSITE" id="PS00802">
    <property type="entry name" value="TRANSKETOLASE_2"/>
    <property type="match status" value="1"/>
</dbReference>
<comment type="function">
    <text evidence="1">Catalyzes the acyloin condensation reaction between C atoms 2 and 3 of pyruvate and glyceraldehyde 3-phosphate to yield 1-deoxy-D-xylulose-5-phosphate (DXP).</text>
</comment>
<comment type="catalytic activity">
    <reaction evidence="1">
        <text>D-glyceraldehyde 3-phosphate + pyruvate + H(+) = 1-deoxy-D-xylulose 5-phosphate + CO2</text>
        <dbReference type="Rhea" id="RHEA:12605"/>
        <dbReference type="ChEBI" id="CHEBI:15361"/>
        <dbReference type="ChEBI" id="CHEBI:15378"/>
        <dbReference type="ChEBI" id="CHEBI:16526"/>
        <dbReference type="ChEBI" id="CHEBI:57792"/>
        <dbReference type="ChEBI" id="CHEBI:59776"/>
        <dbReference type="EC" id="2.2.1.7"/>
    </reaction>
</comment>
<comment type="cofactor">
    <cofactor evidence="1">
        <name>Mg(2+)</name>
        <dbReference type="ChEBI" id="CHEBI:18420"/>
    </cofactor>
    <text evidence="1">Binds 1 Mg(2+) ion per subunit.</text>
</comment>
<comment type="cofactor">
    <cofactor evidence="1">
        <name>thiamine diphosphate</name>
        <dbReference type="ChEBI" id="CHEBI:58937"/>
    </cofactor>
    <text evidence="1">Binds 1 thiamine pyrophosphate per subunit.</text>
</comment>
<comment type="pathway">
    <text evidence="1">Metabolic intermediate biosynthesis; 1-deoxy-D-xylulose 5-phosphate biosynthesis; 1-deoxy-D-xylulose 5-phosphate from D-glyceraldehyde 3-phosphate and pyruvate: step 1/1.</text>
</comment>
<comment type="subunit">
    <text evidence="1">Homodimer.</text>
</comment>
<comment type="similarity">
    <text evidence="1">Belongs to the transketolase family. DXPS subfamily.</text>
</comment>
<proteinExistence type="inferred from homology"/>
<keyword id="KW-0414">Isoprene biosynthesis</keyword>
<keyword id="KW-0460">Magnesium</keyword>
<keyword id="KW-0479">Metal-binding</keyword>
<keyword id="KW-0784">Thiamine biosynthesis</keyword>
<keyword id="KW-0786">Thiamine pyrophosphate</keyword>
<keyword id="KW-0808">Transferase</keyword>
<organism>
    <name type="scientific">Helicobacter pylori (strain J99 / ATCC 700824)</name>
    <name type="common">Campylobacter pylori J99</name>
    <dbReference type="NCBI Taxonomy" id="85963"/>
    <lineage>
        <taxon>Bacteria</taxon>
        <taxon>Pseudomonadati</taxon>
        <taxon>Campylobacterota</taxon>
        <taxon>Epsilonproteobacteria</taxon>
        <taxon>Campylobacterales</taxon>
        <taxon>Helicobacteraceae</taxon>
        <taxon>Helicobacter</taxon>
    </lineage>
</organism>